<proteinExistence type="inferred from homology"/>
<sequence>MPKKNEAPASFETALSELEHIVTRLESGDLPLEDALNEFERGVQLARQGQAKLQQAEQRVQILLSDNEEASPEPFIADNE</sequence>
<keyword id="KW-0963">Cytoplasm</keyword>
<keyword id="KW-0269">Exonuclease</keyword>
<keyword id="KW-0378">Hydrolase</keyword>
<keyword id="KW-0540">Nuclease</keyword>
<evidence type="ECO:0000255" key="1">
    <source>
        <dbReference type="HAMAP-Rule" id="MF_00337"/>
    </source>
</evidence>
<reference key="1">
    <citation type="journal article" date="2008" name="Genome Res.">
        <title>Comparative genome analysis of Salmonella enteritidis PT4 and Salmonella gallinarum 287/91 provides insights into evolutionary and host adaptation pathways.</title>
        <authorList>
            <person name="Thomson N.R."/>
            <person name="Clayton D.J."/>
            <person name="Windhorst D."/>
            <person name="Vernikos G."/>
            <person name="Davidson S."/>
            <person name="Churcher C."/>
            <person name="Quail M.A."/>
            <person name="Stevens M."/>
            <person name="Jones M.A."/>
            <person name="Watson M."/>
            <person name="Barron A."/>
            <person name="Layton A."/>
            <person name="Pickard D."/>
            <person name="Kingsley R.A."/>
            <person name="Bignell A."/>
            <person name="Clark L."/>
            <person name="Harris B."/>
            <person name="Ormond D."/>
            <person name="Abdellah Z."/>
            <person name="Brooks K."/>
            <person name="Cherevach I."/>
            <person name="Chillingworth T."/>
            <person name="Woodward J."/>
            <person name="Norberczak H."/>
            <person name="Lord A."/>
            <person name="Arrowsmith C."/>
            <person name="Jagels K."/>
            <person name="Moule S."/>
            <person name="Mungall K."/>
            <person name="Saunders M."/>
            <person name="Whitehead S."/>
            <person name="Chabalgoity J.A."/>
            <person name="Maskell D."/>
            <person name="Humphreys T."/>
            <person name="Roberts M."/>
            <person name="Barrow P.A."/>
            <person name="Dougan G."/>
            <person name="Parkhill J."/>
        </authorList>
    </citation>
    <scope>NUCLEOTIDE SEQUENCE [LARGE SCALE GENOMIC DNA]</scope>
    <source>
        <strain>P125109</strain>
    </source>
</reference>
<protein>
    <recommendedName>
        <fullName evidence="1">Exodeoxyribonuclease 7 small subunit</fullName>
        <ecNumber evidence="1">3.1.11.6</ecNumber>
    </recommendedName>
    <alternativeName>
        <fullName evidence="1">Exodeoxyribonuclease VII small subunit</fullName>
        <shortName evidence="1">Exonuclease VII small subunit</shortName>
    </alternativeName>
</protein>
<dbReference type="EC" id="3.1.11.6" evidence="1"/>
<dbReference type="EMBL" id="AM933172">
    <property type="protein sequence ID" value="CAR31992.1"/>
    <property type="molecule type" value="Genomic_DNA"/>
</dbReference>
<dbReference type="RefSeq" id="WP_001124944.1">
    <property type="nucleotide sequence ID" value="NC_011294.1"/>
</dbReference>
<dbReference type="SMR" id="B5QTH2"/>
<dbReference type="KEGG" id="set:SEN0406"/>
<dbReference type="HOGENOM" id="CLU_145918_3_3_6"/>
<dbReference type="Proteomes" id="UP000000613">
    <property type="component" value="Chromosome"/>
</dbReference>
<dbReference type="GO" id="GO:0005829">
    <property type="term" value="C:cytosol"/>
    <property type="evidence" value="ECO:0007669"/>
    <property type="project" value="TreeGrafter"/>
</dbReference>
<dbReference type="GO" id="GO:0009318">
    <property type="term" value="C:exodeoxyribonuclease VII complex"/>
    <property type="evidence" value="ECO:0007669"/>
    <property type="project" value="InterPro"/>
</dbReference>
<dbReference type="GO" id="GO:0008855">
    <property type="term" value="F:exodeoxyribonuclease VII activity"/>
    <property type="evidence" value="ECO:0007669"/>
    <property type="project" value="UniProtKB-UniRule"/>
</dbReference>
<dbReference type="GO" id="GO:0006308">
    <property type="term" value="P:DNA catabolic process"/>
    <property type="evidence" value="ECO:0007669"/>
    <property type="project" value="UniProtKB-UniRule"/>
</dbReference>
<dbReference type="FunFam" id="1.10.287.1040:FF:000001">
    <property type="entry name" value="Exodeoxyribonuclease 7 small subunit"/>
    <property type="match status" value="1"/>
</dbReference>
<dbReference type="Gene3D" id="1.10.287.1040">
    <property type="entry name" value="Exonuclease VII, small subunit"/>
    <property type="match status" value="1"/>
</dbReference>
<dbReference type="HAMAP" id="MF_00337">
    <property type="entry name" value="Exonuc_7_S"/>
    <property type="match status" value="1"/>
</dbReference>
<dbReference type="InterPro" id="IPR003761">
    <property type="entry name" value="Exonuc_VII_S"/>
</dbReference>
<dbReference type="InterPro" id="IPR037004">
    <property type="entry name" value="Exonuc_VII_ssu_sf"/>
</dbReference>
<dbReference type="NCBIfam" id="NF002137">
    <property type="entry name" value="PRK00977.1-1"/>
    <property type="match status" value="1"/>
</dbReference>
<dbReference type="NCBIfam" id="NF002140">
    <property type="entry name" value="PRK00977.1-4"/>
    <property type="match status" value="1"/>
</dbReference>
<dbReference type="NCBIfam" id="TIGR01280">
    <property type="entry name" value="xseB"/>
    <property type="match status" value="1"/>
</dbReference>
<dbReference type="PANTHER" id="PTHR34137">
    <property type="entry name" value="EXODEOXYRIBONUCLEASE 7 SMALL SUBUNIT"/>
    <property type="match status" value="1"/>
</dbReference>
<dbReference type="PANTHER" id="PTHR34137:SF1">
    <property type="entry name" value="EXODEOXYRIBONUCLEASE 7 SMALL SUBUNIT"/>
    <property type="match status" value="1"/>
</dbReference>
<dbReference type="Pfam" id="PF02609">
    <property type="entry name" value="Exonuc_VII_S"/>
    <property type="match status" value="1"/>
</dbReference>
<dbReference type="PIRSF" id="PIRSF006488">
    <property type="entry name" value="Exonuc_VII_S"/>
    <property type="match status" value="1"/>
</dbReference>
<dbReference type="SUPFAM" id="SSF116842">
    <property type="entry name" value="XseB-like"/>
    <property type="match status" value="1"/>
</dbReference>
<name>EX7S_SALEP</name>
<comment type="function">
    <text evidence="1">Bidirectionally degrades single-stranded DNA into large acid-insoluble oligonucleotides, which are then degraded further into small acid-soluble oligonucleotides.</text>
</comment>
<comment type="catalytic activity">
    <reaction evidence="1">
        <text>Exonucleolytic cleavage in either 5'- to 3'- or 3'- to 5'-direction to yield nucleoside 5'-phosphates.</text>
        <dbReference type="EC" id="3.1.11.6"/>
    </reaction>
</comment>
<comment type="subunit">
    <text evidence="1">Heterooligomer composed of large and small subunits.</text>
</comment>
<comment type="subcellular location">
    <subcellularLocation>
        <location evidence="1">Cytoplasm</location>
    </subcellularLocation>
</comment>
<comment type="similarity">
    <text evidence="1">Belongs to the XseB family.</text>
</comment>
<gene>
    <name evidence="1" type="primary">xseB</name>
    <name type="ordered locus">SEN0406</name>
</gene>
<organism>
    <name type="scientific">Salmonella enteritidis PT4 (strain P125109)</name>
    <dbReference type="NCBI Taxonomy" id="550537"/>
    <lineage>
        <taxon>Bacteria</taxon>
        <taxon>Pseudomonadati</taxon>
        <taxon>Pseudomonadota</taxon>
        <taxon>Gammaproteobacteria</taxon>
        <taxon>Enterobacterales</taxon>
        <taxon>Enterobacteriaceae</taxon>
        <taxon>Salmonella</taxon>
    </lineage>
</organism>
<feature type="chain" id="PRO_1000119951" description="Exodeoxyribonuclease 7 small subunit">
    <location>
        <begin position="1"/>
        <end position="80"/>
    </location>
</feature>
<accession>B5QTH2</accession>